<keyword id="KW-0238">DNA-binding</keyword>
<keyword id="KW-1185">Reference proteome</keyword>
<keyword id="KW-0804">Transcription</keyword>
<keyword id="KW-0805">Transcription regulation</keyword>
<protein>
    <recommendedName>
        <fullName evidence="1">Quorum-sensing regulator A</fullName>
    </recommendedName>
</protein>
<proteinExistence type="inferred from homology"/>
<reference key="1">
    <citation type="journal article" date="2002" name="Proc. Natl. Acad. Sci. U.S.A.">
        <title>Extensive mosaic structure revealed by the complete genome sequence of uropathogenic Escherichia coli.</title>
        <authorList>
            <person name="Welch R.A."/>
            <person name="Burland V."/>
            <person name="Plunkett G. III"/>
            <person name="Redford P."/>
            <person name="Roesch P."/>
            <person name="Rasko D."/>
            <person name="Buckles E.L."/>
            <person name="Liou S.-R."/>
            <person name="Boutin A."/>
            <person name="Hackett J."/>
            <person name="Stroud D."/>
            <person name="Mayhew G.F."/>
            <person name="Rose D.J."/>
            <person name="Zhou S."/>
            <person name="Schwartz D.C."/>
            <person name="Perna N.T."/>
            <person name="Mobley H.L.T."/>
            <person name="Donnenberg M.S."/>
            <person name="Blattner F.R."/>
        </authorList>
    </citation>
    <scope>NUCLEOTIDE SEQUENCE [LARGE SCALE GENOMIC DNA]</scope>
    <source>
        <strain>CFT073 / ATCC 700928 / UPEC</strain>
    </source>
</reference>
<name>QSEA_ECOL6</name>
<evidence type="ECO:0000250" key="1">
    <source>
        <dbReference type="UniProtKB" id="P67664"/>
    </source>
</evidence>
<evidence type="ECO:0000255" key="2">
    <source>
        <dbReference type="PROSITE-ProRule" id="PRU00253"/>
    </source>
</evidence>
<evidence type="ECO:0000305" key="3"/>
<evidence type="ECO:0000312" key="4">
    <source>
        <dbReference type="EMBL" id="AAN82438.1"/>
    </source>
</evidence>
<organism>
    <name type="scientific">Escherichia coli O6:H1 (strain CFT073 / ATCC 700928 / UPEC)</name>
    <dbReference type="NCBI Taxonomy" id="199310"/>
    <lineage>
        <taxon>Bacteria</taxon>
        <taxon>Pseudomonadati</taxon>
        <taxon>Pseudomonadota</taxon>
        <taxon>Gammaproteobacteria</taxon>
        <taxon>Enterobacterales</taxon>
        <taxon>Enterobacteriaceae</taxon>
        <taxon>Escherichia</taxon>
    </lineage>
</organism>
<dbReference type="EMBL" id="AE014075">
    <property type="protein sequence ID" value="AAN82438.1"/>
    <property type="molecule type" value="Genomic_DNA"/>
</dbReference>
<dbReference type="RefSeq" id="WP_000440317.1">
    <property type="nucleotide sequence ID" value="NZ_CP051263.1"/>
</dbReference>
<dbReference type="SMR" id="P67663"/>
<dbReference type="STRING" id="199310.c3998"/>
<dbReference type="GeneID" id="93778742"/>
<dbReference type="KEGG" id="ecc:c3998"/>
<dbReference type="eggNOG" id="COG0583">
    <property type="taxonomic scope" value="Bacteria"/>
</dbReference>
<dbReference type="HOGENOM" id="CLU_039613_16_2_6"/>
<dbReference type="BioCyc" id="ECOL199310:C3998-MONOMER"/>
<dbReference type="Proteomes" id="UP000001410">
    <property type="component" value="Chromosome"/>
</dbReference>
<dbReference type="GO" id="GO:0003677">
    <property type="term" value="F:DNA binding"/>
    <property type="evidence" value="ECO:0007669"/>
    <property type="project" value="UniProtKB-KW"/>
</dbReference>
<dbReference type="GO" id="GO:0003700">
    <property type="term" value="F:DNA-binding transcription factor activity"/>
    <property type="evidence" value="ECO:0007669"/>
    <property type="project" value="InterPro"/>
</dbReference>
<dbReference type="CDD" id="cd08422">
    <property type="entry name" value="PBP2_CrgA_like"/>
    <property type="match status" value="1"/>
</dbReference>
<dbReference type="FunFam" id="3.40.190.290:FF:000003">
    <property type="entry name" value="HTH-type transcriptional activator AaeR"/>
    <property type="match status" value="1"/>
</dbReference>
<dbReference type="FunFam" id="1.10.10.10:FF:000001">
    <property type="entry name" value="LysR family transcriptional regulator"/>
    <property type="match status" value="1"/>
</dbReference>
<dbReference type="Gene3D" id="3.40.190.290">
    <property type="match status" value="1"/>
</dbReference>
<dbReference type="Gene3D" id="1.10.10.10">
    <property type="entry name" value="Winged helix-like DNA-binding domain superfamily/Winged helix DNA-binding domain"/>
    <property type="match status" value="1"/>
</dbReference>
<dbReference type="InterPro" id="IPR005119">
    <property type="entry name" value="LysR_subst-bd"/>
</dbReference>
<dbReference type="InterPro" id="IPR000847">
    <property type="entry name" value="Tscrpt_reg_HTH_LysR"/>
</dbReference>
<dbReference type="InterPro" id="IPR036388">
    <property type="entry name" value="WH-like_DNA-bd_sf"/>
</dbReference>
<dbReference type="InterPro" id="IPR036390">
    <property type="entry name" value="WH_DNA-bd_sf"/>
</dbReference>
<dbReference type="NCBIfam" id="NF007917">
    <property type="entry name" value="PRK10632.1"/>
    <property type="match status" value="1"/>
</dbReference>
<dbReference type="PANTHER" id="PTHR30537:SF5">
    <property type="entry name" value="HTH-TYPE TRANSCRIPTIONAL ACTIVATOR TTDR-RELATED"/>
    <property type="match status" value="1"/>
</dbReference>
<dbReference type="PANTHER" id="PTHR30537">
    <property type="entry name" value="HTH-TYPE TRANSCRIPTIONAL REGULATOR"/>
    <property type="match status" value="1"/>
</dbReference>
<dbReference type="Pfam" id="PF00126">
    <property type="entry name" value="HTH_1"/>
    <property type="match status" value="1"/>
</dbReference>
<dbReference type="Pfam" id="PF03466">
    <property type="entry name" value="LysR_substrate"/>
    <property type="match status" value="1"/>
</dbReference>
<dbReference type="SUPFAM" id="SSF53850">
    <property type="entry name" value="Periplasmic binding protein-like II"/>
    <property type="match status" value="1"/>
</dbReference>
<dbReference type="SUPFAM" id="SSF46785">
    <property type="entry name" value="Winged helix' DNA-binding domain"/>
    <property type="match status" value="1"/>
</dbReference>
<dbReference type="PROSITE" id="PS50931">
    <property type="entry name" value="HTH_LYSR"/>
    <property type="match status" value="1"/>
</dbReference>
<accession>P67663</accession>
<accession>P45691</accession>
<sequence>MERLKRMSVFAKVVEFGSFTAAARQLQMSVSSISQTVSKLEDELQVKLLNRSTRSIGLTEAGRIYYQGCRRMLHEVQDVHEQLYAFNNTPIGTLRIGCSSTMAQNVLAGLTAKMLKEYPGLSVNLVTGIPAPDLIADGLDVVIRVGALQDSSLFSRRLGAMPMVVCAAKSYLTQYGIPEKPADLSSHSWLEYSVRPDNEFELIAPEGISTRLIPQGRFVTNDPMTLVRWLTAGAGIAYVPLMWVINEINRGELEILLPRYQSDPRPVYALYTEKDKLPLKVQVVINSLTDYFVEVGKLFQEMHGRGKEK</sequence>
<comment type="similarity">
    <text evidence="3">Belongs to the LysR transcriptional regulatory family.</text>
</comment>
<feature type="chain" id="PRO_0000105581" description="Quorum-sensing regulator A">
    <location>
        <begin position="1"/>
        <end position="309"/>
    </location>
</feature>
<feature type="domain" description="HTH lysR-type" evidence="2">
    <location>
        <begin position="1"/>
        <end position="59"/>
    </location>
</feature>
<feature type="DNA-binding region" description="H-T-H motif" evidence="2">
    <location>
        <begin position="19"/>
        <end position="38"/>
    </location>
</feature>
<gene>
    <name evidence="1" type="primary">qseA</name>
    <name evidence="4" type="synonym">yhcS</name>
    <name evidence="4" type="ordered locus">c3998</name>
</gene>